<accession>Q08IE6</accession>
<keyword id="KW-0002">3D-structure</keyword>
<keyword id="KW-0007">Acetylation</keyword>
<keyword id="KW-1064">Adaptive immunity</keyword>
<keyword id="KW-0013">ADP-ribosylation</keyword>
<keyword id="KW-0072">Autophagy</keyword>
<keyword id="KW-1003">Cell membrane</keyword>
<keyword id="KW-0145">Chemotaxis</keyword>
<keyword id="KW-0158">Chromosome</keyword>
<keyword id="KW-0963">Cytoplasm</keyword>
<keyword id="KW-1015">Disulfide bond</keyword>
<keyword id="KW-0227">DNA damage</keyword>
<keyword id="KW-0233">DNA recombination</keyword>
<keyword id="KW-0234">DNA repair</keyword>
<keyword id="KW-0238">DNA-binding</keyword>
<keyword id="KW-0967">Endosome</keyword>
<keyword id="KW-0391">Immunity</keyword>
<keyword id="KW-0395">Inflammatory response</keyword>
<keyword id="KW-0399">Innate immunity</keyword>
<keyword id="KW-1017">Isopeptide bond</keyword>
<keyword id="KW-0472">Membrane</keyword>
<keyword id="KW-0539">Nucleus</keyword>
<keyword id="KW-0558">Oxidation</keyword>
<keyword id="KW-0597">Phosphoprotein</keyword>
<keyword id="KW-1185">Reference proteome</keyword>
<keyword id="KW-0677">Repeat</keyword>
<keyword id="KW-0964">Secreted</keyword>
<feature type="chain" id="PRO_0000269178" description="High mobility group protein B1">
    <location>
        <begin position="1"/>
        <end position="215"/>
    </location>
</feature>
<feature type="DNA-binding region" description="HMG box 1" evidence="5">
    <location>
        <begin position="9"/>
        <end position="79"/>
    </location>
</feature>
<feature type="DNA-binding region" description="HMG box 2" evidence="5">
    <location>
        <begin position="95"/>
        <end position="163"/>
    </location>
</feature>
<feature type="region of interest" description="Sufficient for interaction with HAVCR2" evidence="3">
    <location>
        <begin position="1"/>
        <end position="97"/>
    </location>
</feature>
<feature type="region of interest" description="LPS binding (delipidated)" evidence="1">
    <location>
        <begin position="3"/>
        <end position="15"/>
    </location>
</feature>
<feature type="region of interest" description="NLS 1" evidence="4">
    <location>
        <begin position="27"/>
        <end position="43"/>
    </location>
</feature>
<feature type="region of interest" description="Disordered" evidence="6">
    <location>
        <begin position="76"/>
        <end position="95"/>
    </location>
</feature>
<feature type="region of interest" description="LPS binding (Lipid A)" evidence="1">
    <location>
        <begin position="80"/>
        <end position="96"/>
    </location>
</feature>
<feature type="region of interest" description="Cytokine-stimulating activity" evidence="1">
    <location>
        <begin position="89"/>
        <end position="108"/>
    </location>
</feature>
<feature type="region of interest" description="Binding to AGER/RAGE" evidence="4">
    <location>
        <begin position="150"/>
        <end position="183"/>
    </location>
</feature>
<feature type="region of interest" description="Disordered" evidence="6">
    <location>
        <begin position="161"/>
        <end position="215"/>
    </location>
</feature>
<feature type="region of interest" description="NLS 2" evidence="4">
    <location>
        <begin position="178"/>
        <end position="184"/>
    </location>
</feature>
<feature type="short sequence motif" description="Nuclear localization signal (NLS) 1" evidence="4">
    <location>
        <begin position="27"/>
        <end position="43"/>
    </location>
</feature>
<feature type="short sequence motif" description="Nuclear localization signal (NLS) 2" evidence="4">
    <location>
        <begin position="178"/>
        <end position="184"/>
    </location>
</feature>
<feature type="compositionally biased region" description="Basic and acidic residues" evidence="6">
    <location>
        <begin position="83"/>
        <end position="94"/>
    </location>
</feature>
<feature type="compositionally biased region" description="Basic and acidic residues" evidence="6">
    <location>
        <begin position="161"/>
        <end position="179"/>
    </location>
</feature>
<feature type="compositionally biased region" description="Acidic residues" evidence="6">
    <location>
        <begin position="187"/>
        <end position="215"/>
    </location>
</feature>
<feature type="binding site" evidence="2">
    <location>
        <begin position="1"/>
        <end position="10"/>
    </location>
    <ligand>
        <name>heparin</name>
        <dbReference type="ChEBI" id="CHEBI:28304"/>
    </ligand>
</feature>
<feature type="site" description="Cleavage; by thrombin:thrombomodulin" evidence="2">
    <location>
        <begin position="10"/>
        <end position="11"/>
    </location>
</feature>
<feature type="site" description="Cleavage; by CASP1" evidence="1">
    <location>
        <begin position="67"/>
        <end position="68"/>
    </location>
</feature>
<feature type="modified residue" description="N6-acetyllysine" evidence="2">
    <location>
        <position position="3"/>
    </location>
</feature>
<feature type="modified residue" description="N6-acetyllysine" evidence="2">
    <location>
        <position position="7"/>
    </location>
</feature>
<feature type="modified residue" description="N6-acetyllysine" evidence="2">
    <location>
        <position position="8"/>
    </location>
</feature>
<feature type="modified residue" description="N6-acetyllysine" evidence="2">
    <location>
        <position position="12"/>
    </location>
</feature>
<feature type="modified residue" description="Cysteine sulfonic acid (-SO3H); alternate" evidence="4">
    <location>
        <position position="23"/>
    </location>
</feature>
<feature type="modified residue" description="N6-acetyllysine" evidence="2">
    <location>
        <position position="28"/>
    </location>
</feature>
<feature type="modified residue" description="N6-acetyllysine" evidence="2">
    <location>
        <position position="29"/>
    </location>
</feature>
<feature type="modified residue" description="N6-acetyllysine" evidence="2">
    <location>
        <position position="30"/>
    </location>
</feature>
<feature type="modified residue" description="Phosphoserine" evidence="1">
    <location>
        <position position="35"/>
    </location>
</feature>
<feature type="modified residue" description="N6-acetyllysine" evidence="3">
    <location>
        <position position="43"/>
    </location>
</feature>
<feature type="modified residue" description="Cysteine sulfonic acid (-SO3H); alternate" evidence="4">
    <location>
        <position position="45"/>
    </location>
</feature>
<feature type="modified residue" description="N6-acetyllysine" evidence="3">
    <location>
        <position position="90"/>
    </location>
</feature>
<feature type="modified residue" description="Phosphoserine" evidence="1">
    <location>
        <position position="100"/>
    </location>
</feature>
<feature type="modified residue" description="Cysteine sulfonic acid (-SO3H)" evidence="4">
    <location>
        <position position="106"/>
    </location>
</feature>
<feature type="modified residue" description="N6-acetyllysine" evidence="2">
    <location>
        <position position="127"/>
    </location>
</feature>
<feature type="modified residue" description="N6-acetyllysine" evidence="2">
    <location>
        <position position="128"/>
    </location>
</feature>
<feature type="modified residue" description="N6-acetyllysine" evidence="3">
    <location>
        <position position="141"/>
    </location>
</feature>
<feature type="modified residue" description="N6-acetyllysine" evidence="2">
    <location>
        <position position="172"/>
    </location>
</feature>
<feature type="modified residue" description="N6-acetyllysine" evidence="2">
    <location>
        <position position="173"/>
    </location>
</feature>
<feature type="modified residue" description="N6-acetyllysine" evidence="2">
    <location>
        <position position="177"/>
    </location>
</feature>
<feature type="modified residue" description="N6-acetyllysine" evidence="2">
    <location>
        <position position="180"/>
    </location>
</feature>
<feature type="modified residue" description="ADP-ribosylserine" evidence="1">
    <location>
        <position position="181"/>
    </location>
</feature>
<feature type="modified residue" description="N6-acetyllysine" evidence="2">
    <location>
        <position position="182"/>
    </location>
</feature>
<feature type="modified residue" description="N6-acetyllysine" evidence="2">
    <location>
        <position position="183"/>
    </location>
</feature>
<feature type="modified residue" description="N6-acetyllysine" evidence="2">
    <location>
        <position position="184"/>
    </location>
</feature>
<feature type="modified residue" description="N6-acetyllysine" evidence="2">
    <location>
        <position position="185"/>
    </location>
</feature>
<feature type="disulfide bond" description="In disulfide HMGB1; alternate" evidence="4">
    <location>
        <begin position="23"/>
        <end position="45"/>
    </location>
</feature>
<feature type="cross-link" description="Isoglutamyl lysine isopeptide (Lys-Gln) (interchain with Q-?)" evidence="1">
    <location>
        <position position="28"/>
    </location>
</feature>
<feature type="cross-link" description="Isoglutamyl lysine isopeptide (Lys-Gln) (interchain with Q-?)" evidence="1">
    <location>
        <position position="43"/>
    </location>
</feature>
<feature type="cross-link" description="Isoglutamyl lysine isopeptide (Lys-Gln) (interchain with Q-?)" evidence="1">
    <location>
        <position position="44"/>
    </location>
</feature>
<feature type="cross-link" description="Isoglutamyl lysine isopeptide (Lys-Gln) (interchain with Q-?)" evidence="1">
    <location>
        <position position="68"/>
    </location>
</feature>
<feature type="cross-link" description="Isoglutamyl lysine isopeptide (Lys-Gln) (interchain with Q-?)" evidence="1">
    <location>
        <position position="180"/>
    </location>
</feature>
<feature type="cross-link" description="Isoglutamyl lysine isopeptide (Lys-Gln) (interchain with Q-?)" evidence="1">
    <location>
        <position position="182"/>
    </location>
</feature>
<feature type="cross-link" description="Isoglutamyl lysine isopeptide (Lys-Gln) (interchain with Q-?)" evidence="1">
    <location>
        <position position="183"/>
    </location>
</feature>
<feature type="cross-link" description="Isoglutamyl lysine isopeptide (Lys-Gln) (interchain with Q-?)" evidence="1">
    <location>
        <position position="184"/>
    </location>
</feature>
<feature type="helix" evidence="8">
    <location>
        <begin position="103"/>
        <end position="106"/>
    </location>
</feature>
<feature type="helix" evidence="8">
    <location>
        <begin position="111"/>
        <end position="114"/>
    </location>
</feature>
<feature type="helix" evidence="8">
    <location>
        <begin position="123"/>
        <end position="135"/>
    </location>
</feature>
<sequence length="215" mass="24894">MGKGDPKKPRGKMSSYAFFVQTCREEHKKKHPDASVNFSEFSKKCSERWKTMSAKEKGKFEDMAKADKARYEREMKTYIPPKGETKKKFKDPNAPKRPPSAFFLFCSEYRPKIKGEHPGLSIGDVAKKLGEMWNNTAADDKQPYEKKAAKLKEKYEKDIAAYRAKGKPDAAKKGVVKAEKSKKKKEEEEDEEDEEDEEEEEDEEDEDEEEDDDDE</sequence>
<organism>
    <name type="scientific">Equus caballus</name>
    <name type="common">Horse</name>
    <dbReference type="NCBI Taxonomy" id="9796"/>
    <lineage>
        <taxon>Eukaryota</taxon>
        <taxon>Metazoa</taxon>
        <taxon>Chordata</taxon>
        <taxon>Craniata</taxon>
        <taxon>Vertebrata</taxon>
        <taxon>Euteleostomi</taxon>
        <taxon>Mammalia</taxon>
        <taxon>Eutheria</taxon>
        <taxon>Laurasiatheria</taxon>
        <taxon>Perissodactyla</taxon>
        <taxon>Equidae</taxon>
        <taxon>Equus</taxon>
    </lineage>
</organism>
<name>HMGB1_HORSE</name>
<gene>
    <name type="primary">HMGB1</name>
    <name type="synonym">HMG1</name>
</gene>
<proteinExistence type="evidence at protein level"/>
<reference key="1">
    <citation type="submission" date="2006-09" db="EMBL/GenBank/DDBJ databases">
        <title>cDNA cloning of high-mobility group box 1 (HMGB1) from equine liver.</title>
        <authorList>
            <person name="Miyasho T."/>
            <person name="Yokota H."/>
        </authorList>
    </citation>
    <scope>NUCLEOTIDE SEQUENCE [MRNA]</scope>
    <source>
        <tissue>Liver</tissue>
    </source>
</reference>
<comment type="function">
    <text evidence="1 2 4">Multifunctional redox sensitive protein with various roles in different cellular compartments. In the nucleus is one of the major chromatin-associated non-histone proteins and acts as a DNA chaperone involved in replication, transcription, chromatin remodeling, V(D)J recombination, DNA repair and genome stability. Proposed to be an universal biosensor for nucleic acids. Promotes host inflammatory response to sterile and infectious signals and is involved in the coordination and integration of innate and adaptive immune responses. In the cytoplasm functions as a sensor and/or chaperone for immunogenic nucleic acids implicating the activation of TLR9-mediated immune responses, and mediates autophagy. Acts as a danger-associated molecular pattern (DAMP) molecule that amplifies immune responses during tissue injury. Released to the extracellular environment can bind DNA, nucleosomes, IL-1 beta, CXCL12, AGER isoform 2/sRAGE, lipopolysaccharide (LPS) and lipoteichoic acid (LTA), and activates cells through engagement of multiple surface receptors. In the extracellular compartment fully reduced HMGB1 (released by necrosis) acts as a chemokine, disulfide HMGB1 (actively secreted) as a cytokine, and sulfonyl HMGB1 (released from apoptotic cells) promotes immunological tolerance. Has proangiogenic activity. May be involved in platelet activation. Binds to phosphatidylserine and phosphatidylethanolamide. Bound to RAGE mediates signaling for neuronal outgrowth. May play a role in accumulation of expanded polyglutamine (polyQ) proteins.</text>
</comment>
<comment type="function">
    <text evidence="1 2 3 4">Nuclear functions are attributed to fully reduced HGMB1. Associates with chromatin and binds DNA with a preference to non-canonical DNA structures such as single-stranded DNA, DNA-containing cruciforms or bent structures, supercoiled DNA and ZDNA. Can bent DNA and enhance DNA flexibility by looping thus providing a mechanism to promote activities on various gene promoters by enhancing transcription factor binding and/or bringing distant regulatory sequences into close proximity. May be involved in nucleotide excision repair (NER), mismatch repair (MMR) and base excision repair (BER) pathways, and double strand break repair such as non-homologous end joining (NHEJ). Involved in V(D)J recombination by acting as a cofactor of the RAG complex: acts by stimulating cleavage and RAG protein binding at the 23 bp spacer of conserved recombination signal sequences (RSS). In vitro can displace histone H1 from highly bent DNA. Can restructure the canonical nucleosome leading to relaxation of structural constraints for transcription factor-binding. Enhances binding of sterol regulatory element-binding proteins (SREBPs) such as SREBF1 to their cognate DNA sequences and increases their transcriptional activities. Facilitates binding of TP53 to DNA. May be involved in mitochondrial quality control and autophagy in a transcription-dependent fashion implicating HSPB1. Can modulate the activity of the telomerase complex and may be involved in telomere maintenance.</text>
</comment>
<comment type="function">
    <text evidence="1 3">In the cytoplasm proposed to dissociate the BECN1:BCL2 complex via competitive interaction with BECN1 leading to autophagy activation. Can protect BECN1 and ATG5 from calpain-mediated cleavage and thus proposed to control their proautophagic and proapoptotic functions and to regulate the extent and severity of inflammation-associated cellular injury. In myeloid cells has a protective role against endotoxemia and bacterial infection by promoting autophagy. Involved in endosomal translocation and activation of TLR9 in response to CpG-DNA in macrophages.</text>
</comment>
<comment type="function">
    <text evidence="1 2 3 4">In the extracellular compartment (following either active secretion or passive release) involved in regulation of the inflammatory response. Fully reduced HGMB1 (which subsequently gets oxidized after release) in association with CXCL12 mediates the recruitment of inflammatory cells during the initial phase of tissue injury; the CXCL12:HMGB1 complex triggers CXCR4 homodimerization. Induces the migration of monocyte-derived immature dendritic cells and seems to regulate adhesive and migratory functions of neutrophils implicating AGER/RAGE and ITGAM. Can bind to various types of DNA and RNA including microbial unmethylated CpG-DNA to enhance the innate immune response to nucleic acids. Proposed to act in promiscuous DNA/RNA sensing which cooperates with subsequent discriminative sensing by specific pattern recognition receptors. Promotes extracellular DNA-induced AIM2 inflammasome activation implicating AGER/RAGE. Disulfide HMGB1 binds to transmembrane receptors, such as AGER/RAGE, TLR2, TLR4 and probably TREM1, thus activating their signal transduction pathways. Mediates the release of cytokines/chemokines such as TNF, IL-1, IL-6, IL-8, CCL2, CCL3, CCL4 and CXCL10. Promotes secretion of interferon-gamma by macrophage-stimulated natural killer (NK) cells in concert with other cytokines like IL-2 or IL-12. TLR4 is proposed to be the primary receptor promoting macrophage activation and signaling through TLR4 seems to implicate LY96/MD-2. In bacterial LPS- or LTA-mediated inflammatory responses binds to the endotoxins and transfers them to CD14 for signaling to the respective TLR4:LY96 and TLR2 complexes. Contributes to tumor proliferation by association with ACER/RAGE. Can bind to IL1-beta and signals through the IL1R1:IL1RAP receptor complex. Binding to class A CpG activates cytokine production in plasmacytoid dendritic cells implicating TLR9, MYD88 and AGER/RAGE and can activate autoreactive B cells. Via HMGB1-containing chromatin immune complexes may also promote B cell responses to endogenous TLR9 ligands through a B-cell receptor (BCR)-dependent and ACER/RAGE-independent mechanism. Inhibits phagocytosis of apoptotic cells by macrophages; the function is dependent on poly-ADP-ribosylation and involves binding to phosphatidylserine on the cell surface of apoptotic cells. In adaptive immunity may be involved in enhancing immunity through activation of effector T-cells and suppression of regulatory T (TReg) cells. In contrast, without implicating effector or regulatory T-cells, required for tumor infiltration and activation of T-cells expressing the lymphotoxin LTA:LTB heterotrimer thus promoting tumor malignant progression. Also reported to limit proliferation of T-cells. Released HMGB1:nucleosome complexes formed during apoptosis can signal through TLR2 to induce cytokine production. Involved in induction of immunological tolerance by apoptotic cells; its pro-inflammatory activities when released by apoptotic cells are neutralized by reactive oxygen species (ROS)-dependent oxidation specifically on Cys-106. During macrophage activation by activated lymphocyte-derived self apoptotic DNA (ALD-DNA) promotes recruitment of ALD-DNA to endosomes.</text>
</comment>
<comment type="subunit">
    <text evidence="1 3 4">Interacts (fully reduced HMGB1) with CXCL12; probably in a 1:2 ratio involving two molecules of CXCL12, each interacting with one HMG box of HMGB1; inhibited by glycyrrhizin. Associates with the TLR4:LY96 receptor complex. Component of the RAG complex composed of core components RAG1 and RAG2, and associated component HMGB1 or HMGB2. Interacts (in cytoplasm upon starvation) with BECN1; inhibits the interaction of BECN1 and BCL2 leading to promotion of autophagy. Interacts with KPNA1; involved in nuclear import. Interacts with SREBF1, TLR2, TLR4, TLR9, PTPRZ1, APEX1, FEN1, POLB, TERT. Interacts with IL1B, AGER, MSH2, XPA, XPC, HNF1A, TP53. Interacts with CD24; the probable CD24:SIGLEC10 complex is proposed to inhibit HGMB1-mediated tissue damage immune response. Interacts with THBD; prevents HGMB1 interaction with ACER/RAGE and inhibits HGMB1 pro-inflammatory activity. Interacts with HAVCR2; impairs HMGB1 binding to B-DNA and likely HMGB1-mediated innate immune response. Interacts with XPO1; mediating nuclear export. Interacts with receptor RAGE/AGER (By similarity).</text>
</comment>
<comment type="subcellular location">
    <subcellularLocation>
        <location evidence="1">Nucleus</location>
    </subcellularLocation>
    <subcellularLocation>
        <location evidence="2 4">Chromosome</location>
    </subcellularLocation>
    <subcellularLocation>
        <location evidence="1">Cytoplasm</location>
    </subcellularLocation>
    <subcellularLocation>
        <location evidence="1 3">Secreted</location>
    </subcellularLocation>
    <subcellularLocation>
        <location evidence="1 3 4">Cell membrane</location>
        <topology evidence="1 3 4">Peripheral membrane protein</topology>
        <orientation evidence="1 3 4">Extracellular side</orientation>
    </subcellularLocation>
    <subcellularLocation>
        <location evidence="3">Endosome</location>
    </subcellularLocation>
    <subcellularLocation>
        <location evidence="3">Endoplasmic reticulum-Golgi intermediate compartment</location>
    </subcellularLocation>
    <text evidence="1 3">In basal state predominantly nuclear. Shuttles between the cytoplasm and the nucleus. Translocates from the nucleus to the cytoplasm upon autophagy stimulation. Release from macrophages in the extracellular milieu requires the activation of NLRC4 or NLRP3 inflammasomes (By similarity). Passively released to the extracellular milieu from necrotic cells by diffusion, involving the fully reduced HGMB1 which subsequently gets oxidized. Also released from apoptotic cells. Active secretion from a variety of immune and non-immune cells such as macrophages, monocytes, neutrophils, dendritic cells, natural killer cells and plasma cells in response to various stimuli such as LPS and cytokines involves a nonconventional secretory process via secretory lysosomes. Found on the surface of activated platelets.</text>
</comment>
<comment type="domain">
    <text evidence="1">HMG box 2 mediates pro-inflammatory cytokine-stimulating activity and binding to TLR4. However, not involved in mediating immunogenic activity in the context of apoptosis-induced immune tolerance.</text>
</comment>
<comment type="domain">
    <text evidence="1 4">The acidic C-terminal domain forms a flexible structure which can reversibly interact intramolecularily with the HMG boxes and modulate binding to DNA and other proteins.</text>
</comment>
<comment type="PTM">
    <text evidence="1">Phosphorylated at serine residues. Phosphorylation in both NLS regions is required for cytoplasmic translocation followed by secretion.</text>
</comment>
<comment type="PTM">
    <text evidence="1 2 4">Acetylated on multiple sites upon stimulation with LPS (By similarity). Acetylation on lysine residues in the nuclear localization signals (NLS 1 and NLS 2) leads to cytoplasmic localization and subsequent secretion. Acetylation on Lys-3 results in preferential binding to DNA ends and impairs DNA bending activity (By similarity).</text>
</comment>
<comment type="PTM">
    <text evidence="1">Reduction/oxidation of cysteine residues Cys-23, Cys-45 and Cys-106 and a possible intramolecular disulfide bond involving Cys-23 and Cys-45 give rise to different redox forms with specific functional activities in various cellular compartments: 1- fully reduced HMGB1 (HMGB1C23hC45hC106h), 2- disulfide HMGB1 (HMGB1C23-C45C106h) and 3- sulfonyl HMGB1 (HMGB1C23soC45soC106so).</text>
</comment>
<comment type="PTM">
    <text evidence="3">Poly-ADP-ribosylated by PARP1 when secreted following stimulation with LPS (By similarity).</text>
</comment>
<comment type="PTM">
    <text evidence="1 2">In vitro cleavage by CASP1 is liberating a HMG box 1-containing peptide which may mediate immunogenic activity; the peptide antagonizes apoptosis-induced immune tolerance. Can be proteolytically cleaved by a thrombin:thrombomodulin complex; reduces binding to heparin and pro-inflammatory activities (By similarity).</text>
</comment>
<comment type="PTM">
    <text evidence="1">Forms covalent cross-links mediated by transglutaminase TGM2, between a glutamine and the epsilon-amino group of a lysine residue, forming homopolymers and heteropolymers.</text>
</comment>
<comment type="similarity">
    <text evidence="7">Belongs to the HMGB family.</text>
</comment>
<evidence type="ECO:0000250" key="1">
    <source>
        <dbReference type="UniProtKB" id="P09429"/>
    </source>
</evidence>
<evidence type="ECO:0000250" key="2">
    <source>
        <dbReference type="UniProtKB" id="P10103"/>
    </source>
</evidence>
<evidence type="ECO:0000250" key="3">
    <source>
        <dbReference type="UniProtKB" id="P63158"/>
    </source>
</evidence>
<evidence type="ECO:0000250" key="4">
    <source>
        <dbReference type="UniProtKB" id="P63159"/>
    </source>
</evidence>
<evidence type="ECO:0000255" key="5">
    <source>
        <dbReference type="PROSITE-ProRule" id="PRU00267"/>
    </source>
</evidence>
<evidence type="ECO:0000256" key="6">
    <source>
        <dbReference type="SAM" id="MobiDB-lite"/>
    </source>
</evidence>
<evidence type="ECO:0000305" key="7"/>
<evidence type="ECO:0007829" key="8">
    <source>
        <dbReference type="PDB" id="6OER"/>
    </source>
</evidence>
<protein>
    <recommendedName>
        <fullName>High mobility group protein B1</fullName>
    </recommendedName>
    <alternativeName>
        <fullName>High mobility group protein 1</fullName>
        <shortName>HMG-1</shortName>
    </alternativeName>
</protein>
<dbReference type="EMBL" id="AB275457">
    <property type="protein sequence ID" value="BAF33339.1"/>
    <property type="molecule type" value="mRNA"/>
</dbReference>
<dbReference type="RefSeq" id="NP_001075304.1">
    <property type="nucleotide sequence ID" value="NM_001081835.2"/>
</dbReference>
<dbReference type="RefSeq" id="XP_070095319.1">
    <property type="nucleotide sequence ID" value="XM_070239218.1"/>
</dbReference>
<dbReference type="RefSeq" id="XP_070095320.1">
    <property type="nucleotide sequence ID" value="XM_070239219.1"/>
</dbReference>
<dbReference type="RefSeq" id="XP_070095321.1">
    <property type="nucleotide sequence ID" value="XM_070239220.1"/>
</dbReference>
<dbReference type="RefSeq" id="XP_070095322.1">
    <property type="nucleotide sequence ID" value="XM_070239221.1"/>
</dbReference>
<dbReference type="RefSeq" id="XP_070095323.1">
    <property type="nucleotide sequence ID" value="XM_070239222.1"/>
</dbReference>
<dbReference type="RefSeq" id="XP_070095324.1">
    <property type="nucleotide sequence ID" value="XM_070239223.1"/>
</dbReference>
<dbReference type="RefSeq" id="XP_070095325.1">
    <property type="nucleotide sequence ID" value="XM_070239224.1"/>
</dbReference>
<dbReference type="RefSeq" id="XP_070095326.1">
    <property type="nucleotide sequence ID" value="XM_070239225.1"/>
</dbReference>
<dbReference type="PDB" id="6OER">
    <property type="method" value="EM"/>
    <property type="resolution" value="3.29 A"/>
    <property type="chains" value="H=1-163"/>
</dbReference>
<dbReference type="PDBsum" id="6OER"/>
<dbReference type="EMDB" id="EMD-20035"/>
<dbReference type="SMR" id="Q08IE6"/>
<dbReference type="FunCoup" id="Q08IE6">
    <property type="interactions" value="1933"/>
</dbReference>
<dbReference type="STRING" id="9796.ENSECAP00000006518"/>
<dbReference type="PaxDb" id="9796-ENSECAP00000006518"/>
<dbReference type="GeneID" id="100033873"/>
<dbReference type="KEGG" id="ecb:100033873"/>
<dbReference type="CTD" id="3146"/>
<dbReference type="HOGENOM" id="CLU_082854_0_0_1"/>
<dbReference type="InParanoid" id="Q08IE6"/>
<dbReference type="OMA" id="PHSANEV"/>
<dbReference type="OrthoDB" id="1919336at2759"/>
<dbReference type="TreeFam" id="TF105371"/>
<dbReference type="Proteomes" id="UP000002281">
    <property type="component" value="Chromosome 17"/>
</dbReference>
<dbReference type="Bgee" id="ENSECAG00000008439">
    <property type="expression patterns" value="Expressed in bone marrow and 23 other cell types or tissues"/>
</dbReference>
<dbReference type="ExpressionAtlas" id="Q08IE6">
    <property type="expression patterns" value="baseline"/>
</dbReference>
<dbReference type="GO" id="GO:0005694">
    <property type="term" value="C:chromosome"/>
    <property type="evidence" value="ECO:0007669"/>
    <property type="project" value="UniProtKB-SubCell"/>
</dbReference>
<dbReference type="GO" id="GO:0005793">
    <property type="term" value="C:endoplasmic reticulum-Golgi intermediate compartment"/>
    <property type="evidence" value="ECO:0007669"/>
    <property type="project" value="UniProtKB-SubCell"/>
</dbReference>
<dbReference type="GO" id="GO:0005768">
    <property type="term" value="C:endosome"/>
    <property type="evidence" value="ECO:0007669"/>
    <property type="project" value="UniProtKB-SubCell"/>
</dbReference>
<dbReference type="GO" id="GO:0005576">
    <property type="term" value="C:extracellular region"/>
    <property type="evidence" value="ECO:0007669"/>
    <property type="project" value="UniProtKB-SubCell"/>
</dbReference>
<dbReference type="GO" id="GO:0005634">
    <property type="term" value="C:nucleus"/>
    <property type="evidence" value="ECO:0007669"/>
    <property type="project" value="UniProtKB-SubCell"/>
</dbReference>
<dbReference type="GO" id="GO:0005886">
    <property type="term" value="C:plasma membrane"/>
    <property type="evidence" value="ECO:0007669"/>
    <property type="project" value="UniProtKB-SubCell"/>
</dbReference>
<dbReference type="GO" id="GO:0000405">
    <property type="term" value="F:bubble DNA binding"/>
    <property type="evidence" value="ECO:0000250"/>
    <property type="project" value="AgBase"/>
</dbReference>
<dbReference type="GO" id="GO:0008301">
    <property type="term" value="F:DNA binding, bending"/>
    <property type="evidence" value="ECO:0000250"/>
    <property type="project" value="AgBase"/>
</dbReference>
<dbReference type="GO" id="GO:0000400">
    <property type="term" value="F:four-way junction DNA binding"/>
    <property type="evidence" value="ECO:0000250"/>
    <property type="project" value="AgBase"/>
</dbReference>
<dbReference type="GO" id="GO:0044378">
    <property type="term" value="F:non-sequence-specific DNA binding, bending"/>
    <property type="evidence" value="ECO:0000250"/>
    <property type="project" value="AgBase"/>
</dbReference>
<dbReference type="GO" id="GO:0097100">
    <property type="term" value="F:supercoiled DNA binding"/>
    <property type="evidence" value="ECO:0000250"/>
    <property type="project" value="AgBase"/>
</dbReference>
<dbReference type="GO" id="GO:0002250">
    <property type="term" value="P:adaptive immune response"/>
    <property type="evidence" value="ECO:0007669"/>
    <property type="project" value="UniProtKB-KW"/>
</dbReference>
<dbReference type="GO" id="GO:0006914">
    <property type="term" value="P:autophagy"/>
    <property type="evidence" value="ECO:0007669"/>
    <property type="project" value="UniProtKB-KW"/>
</dbReference>
<dbReference type="GO" id="GO:0006935">
    <property type="term" value="P:chemotaxis"/>
    <property type="evidence" value="ECO:0007669"/>
    <property type="project" value="UniProtKB-KW"/>
</dbReference>
<dbReference type="GO" id="GO:0032392">
    <property type="term" value="P:DNA geometric change"/>
    <property type="evidence" value="ECO:0000250"/>
    <property type="project" value="AgBase"/>
</dbReference>
<dbReference type="GO" id="GO:0006310">
    <property type="term" value="P:DNA recombination"/>
    <property type="evidence" value="ECO:0007669"/>
    <property type="project" value="UniProtKB-KW"/>
</dbReference>
<dbReference type="GO" id="GO:0006281">
    <property type="term" value="P:DNA repair"/>
    <property type="evidence" value="ECO:0007669"/>
    <property type="project" value="UniProtKB-KW"/>
</dbReference>
<dbReference type="GO" id="GO:0006954">
    <property type="term" value="P:inflammatory response"/>
    <property type="evidence" value="ECO:0007669"/>
    <property type="project" value="UniProtKB-KW"/>
</dbReference>
<dbReference type="GO" id="GO:0045087">
    <property type="term" value="P:innate immune response"/>
    <property type="evidence" value="ECO:0007669"/>
    <property type="project" value="UniProtKB-KW"/>
</dbReference>
<dbReference type="GO" id="GO:0006357">
    <property type="term" value="P:regulation of transcription by RNA polymerase II"/>
    <property type="evidence" value="ECO:0000318"/>
    <property type="project" value="GO_Central"/>
</dbReference>
<dbReference type="CDD" id="cd21978">
    <property type="entry name" value="HMG-box_HMGB_rpt1"/>
    <property type="match status" value="1"/>
</dbReference>
<dbReference type="CDD" id="cd21979">
    <property type="entry name" value="HMG-box_HMGB_rpt2"/>
    <property type="match status" value="1"/>
</dbReference>
<dbReference type="FunFam" id="1.10.30.10:FF:000006">
    <property type="entry name" value="High mobility group protein B1"/>
    <property type="match status" value="1"/>
</dbReference>
<dbReference type="FunFam" id="1.10.30.10:FF:000015">
    <property type="entry name" value="high mobility group protein B1"/>
    <property type="match status" value="1"/>
</dbReference>
<dbReference type="Gene3D" id="1.10.30.10">
    <property type="entry name" value="High mobility group box domain"/>
    <property type="match status" value="2"/>
</dbReference>
<dbReference type="InterPro" id="IPR009071">
    <property type="entry name" value="HMG_box_dom"/>
</dbReference>
<dbReference type="InterPro" id="IPR036910">
    <property type="entry name" value="HMG_box_dom_sf"/>
</dbReference>
<dbReference type="InterPro" id="IPR017967">
    <property type="entry name" value="HMG_boxA_CS"/>
</dbReference>
<dbReference type="InterPro" id="IPR050342">
    <property type="entry name" value="HMGB"/>
</dbReference>
<dbReference type="PANTHER" id="PTHR48112:SF35">
    <property type="entry name" value="HIGH MOBILITY GROUP PROTEIN B1"/>
    <property type="match status" value="1"/>
</dbReference>
<dbReference type="PANTHER" id="PTHR48112">
    <property type="entry name" value="HIGH MOBILITY GROUP PROTEIN DSP1"/>
    <property type="match status" value="1"/>
</dbReference>
<dbReference type="Pfam" id="PF00505">
    <property type="entry name" value="HMG_box"/>
    <property type="match status" value="1"/>
</dbReference>
<dbReference type="Pfam" id="PF09011">
    <property type="entry name" value="HMG_box_2"/>
    <property type="match status" value="1"/>
</dbReference>
<dbReference type="PRINTS" id="PR00886">
    <property type="entry name" value="HIGHMOBLTY12"/>
</dbReference>
<dbReference type="SMART" id="SM00398">
    <property type="entry name" value="HMG"/>
    <property type="match status" value="2"/>
</dbReference>
<dbReference type="SUPFAM" id="SSF47095">
    <property type="entry name" value="HMG-box"/>
    <property type="match status" value="2"/>
</dbReference>
<dbReference type="PROSITE" id="PS00353">
    <property type="entry name" value="HMG_BOX_1"/>
    <property type="match status" value="1"/>
</dbReference>
<dbReference type="PROSITE" id="PS50118">
    <property type="entry name" value="HMG_BOX_2"/>
    <property type="match status" value="2"/>
</dbReference>